<reference key="1">
    <citation type="journal article" date="2010" name="Genome Biol. Evol.">
        <title>Continuing evolution of Burkholderia mallei through genome reduction and large-scale rearrangements.</title>
        <authorList>
            <person name="Losada L."/>
            <person name="Ronning C.M."/>
            <person name="DeShazer D."/>
            <person name="Woods D."/>
            <person name="Fedorova N."/>
            <person name="Kim H.S."/>
            <person name="Shabalina S.A."/>
            <person name="Pearson T.R."/>
            <person name="Brinkac L."/>
            <person name="Tan P."/>
            <person name="Nandi T."/>
            <person name="Crabtree J."/>
            <person name="Badger J."/>
            <person name="Beckstrom-Sternberg S."/>
            <person name="Saqib M."/>
            <person name="Schutzer S.E."/>
            <person name="Keim P."/>
            <person name="Nierman W.C."/>
        </authorList>
    </citation>
    <scope>NUCLEOTIDE SEQUENCE [LARGE SCALE GENOMIC DNA]</scope>
    <source>
        <strain>NCTC 10229</strain>
    </source>
</reference>
<keyword id="KW-0963">Cytoplasm</keyword>
<keyword id="KW-0694">RNA-binding</keyword>
<accession>A2SB97</accession>
<gene>
    <name evidence="1" type="primary">smpB</name>
    <name type="ordered locus">BMA10229_A3280</name>
</gene>
<proteinExistence type="inferred from homology"/>
<evidence type="ECO:0000255" key="1">
    <source>
        <dbReference type="HAMAP-Rule" id="MF_00023"/>
    </source>
</evidence>
<evidence type="ECO:0000256" key="2">
    <source>
        <dbReference type="SAM" id="MobiDB-lite"/>
    </source>
</evidence>
<dbReference type="EMBL" id="CP000546">
    <property type="protein sequence ID" value="ABN02849.1"/>
    <property type="molecule type" value="Genomic_DNA"/>
</dbReference>
<dbReference type="RefSeq" id="WP_004197080.1">
    <property type="nucleotide sequence ID" value="NC_008836.1"/>
</dbReference>
<dbReference type="SMR" id="A2SB97"/>
<dbReference type="GeneID" id="93060677"/>
<dbReference type="KEGG" id="bml:BMA10229_A3280"/>
<dbReference type="HOGENOM" id="CLU_108953_3_0_4"/>
<dbReference type="Proteomes" id="UP000002283">
    <property type="component" value="Chromosome I"/>
</dbReference>
<dbReference type="GO" id="GO:0005829">
    <property type="term" value="C:cytosol"/>
    <property type="evidence" value="ECO:0007669"/>
    <property type="project" value="TreeGrafter"/>
</dbReference>
<dbReference type="GO" id="GO:0003723">
    <property type="term" value="F:RNA binding"/>
    <property type="evidence" value="ECO:0007669"/>
    <property type="project" value="UniProtKB-UniRule"/>
</dbReference>
<dbReference type="GO" id="GO:0070929">
    <property type="term" value="P:trans-translation"/>
    <property type="evidence" value="ECO:0007669"/>
    <property type="project" value="UniProtKB-UniRule"/>
</dbReference>
<dbReference type="CDD" id="cd09294">
    <property type="entry name" value="SmpB"/>
    <property type="match status" value="1"/>
</dbReference>
<dbReference type="Gene3D" id="2.40.280.10">
    <property type="match status" value="1"/>
</dbReference>
<dbReference type="HAMAP" id="MF_00023">
    <property type="entry name" value="SmpB"/>
    <property type="match status" value="1"/>
</dbReference>
<dbReference type="InterPro" id="IPR023620">
    <property type="entry name" value="SmpB"/>
</dbReference>
<dbReference type="InterPro" id="IPR000037">
    <property type="entry name" value="SsrA-bd_prot"/>
</dbReference>
<dbReference type="InterPro" id="IPR020081">
    <property type="entry name" value="SsrA-bd_prot_CS"/>
</dbReference>
<dbReference type="NCBIfam" id="NF003843">
    <property type="entry name" value="PRK05422.1"/>
    <property type="match status" value="1"/>
</dbReference>
<dbReference type="NCBIfam" id="TIGR00086">
    <property type="entry name" value="smpB"/>
    <property type="match status" value="1"/>
</dbReference>
<dbReference type="PANTHER" id="PTHR30308:SF2">
    <property type="entry name" value="SSRA-BINDING PROTEIN"/>
    <property type="match status" value="1"/>
</dbReference>
<dbReference type="PANTHER" id="PTHR30308">
    <property type="entry name" value="TMRNA-BINDING COMPONENT OF TRANS-TRANSLATION TAGGING COMPLEX"/>
    <property type="match status" value="1"/>
</dbReference>
<dbReference type="Pfam" id="PF01668">
    <property type="entry name" value="SmpB"/>
    <property type="match status" value="1"/>
</dbReference>
<dbReference type="SUPFAM" id="SSF74982">
    <property type="entry name" value="Small protein B (SmpB)"/>
    <property type="match status" value="1"/>
</dbReference>
<dbReference type="PROSITE" id="PS01317">
    <property type="entry name" value="SSRP"/>
    <property type="match status" value="1"/>
</dbReference>
<feature type="chain" id="PRO_1000002014" description="SsrA-binding protein">
    <location>
        <begin position="1"/>
        <end position="148"/>
    </location>
</feature>
<feature type="region of interest" description="Disordered" evidence="2">
    <location>
        <begin position="123"/>
        <end position="148"/>
    </location>
</feature>
<feature type="compositionally biased region" description="Basic and acidic residues" evidence="2">
    <location>
        <begin position="126"/>
        <end position="142"/>
    </location>
</feature>
<protein>
    <recommendedName>
        <fullName evidence="1">SsrA-binding protein</fullName>
    </recommendedName>
    <alternativeName>
        <fullName evidence="1">Small protein B</fullName>
    </alternativeName>
</protein>
<name>SSRP_BURM9</name>
<sequence length="148" mass="17212">MSIIDNRKAFFDYHIEERYEAGLVLEGWEVKALRAGRGQIKEGYVVVKHAEIFLIGTHISPLPEASTHIKPDPVRTRKLLLHRDEIKKLIGKVEQRGYTLVPLNFHYKGGRVKCEIGLAKGKKLHDKRETEKKRDWEREKARIMRSAT</sequence>
<comment type="function">
    <text evidence="1">Required for rescue of stalled ribosomes mediated by trans-translation. Binds to transfer-messenger RNA (tmRNA), required for stable association of tmRNA with ribosomes. tmRNA and SmpB together mimic tRNA shape, replacing the anticodon stem-loop with SmpB. tmRNA is encoded by the ssrA gene; the 2 termini fold to resemble tRNA(Ala) and it encodes a 'tag peptide', a short internal open reading frame. During trans-translation Ala-aminoacylated tmRNA acts like a tRNA, entering the A-site of stalled ribosomes, displacing the stalled mRNA. The ribosome then switches to translate the ORF on the tmRNA; the nascent peptide is terminated with the 'tag peptide' encoded by the tmRNA and targeted for degradation. The ribosome is freed to recommence translation, which seems to be the essential function of trans-translation.</text>
</comment>
<comment type="subcellular location">
    <subcellularLocation>
        <location evidence="1">Cytoplasm</location>
    </subcellularLocation>
    <text evidence="1">The tmRNA-SmpB complex associates with stalled 70S ribosomes.</text>
</comment>
<comment type="similarity">
    <text evidence="1">Belongs to the SmpB family.</text>
</comment>
<organism>
    <name type="scientific">Burkholderia mallei (strain NCTC 10229)</name>
    <dbReference type="NCBI Taxonomy" id="412022"/>
    <lineage>
        <taxon>Bacteria</taxon>
        <taxon>Pseudomonadati</taxon>
        <taxon>Pseudomonadota</taxon>
        <taxon>Betaproteobacteria</taxon>
        <taxon>Burkholderiales</taxon>
        <taxon>Burkholderiaceae</taxon>
        <taxon>Burkholderia</taxon>
        <taxon>pseudomallei group</taxon>
    </lineage>
</organism>